<gene>
    <name evidence="1" type="primary">rpmA</name>
    <name type="ordered locus">BPEN_097</name>
</gene>
<organism>
    <name type="scientific">Blochmanniella pennsylvanica (strain BPEN)</name>
    <dbReference type="NCBI Taxonomy" id="291272"/>
    <lineage>
        <taxon>Bacteria</taxon>
        <taxon>Pseudomonadati</taxon>
        <taxon>Pseudomonadota</taxon>
        <taxon>Gammaproteobacteria</taxon>
        <taxon>Enterobacterales</taxon>
        <taxon>Enterobacteriaceae</taxon>
        <taxon>ant endosymbionts</taxon>
        <taxon>Candidatus Blochmanniella</taxon>
    </lineage>
</organism>
<keyword id="KW-1185">Reference proteome</keyword>
<keyword id="KW-0687">Ribonucleoprotein</keyword>
<keyword id="KW-0689">Ribosomal protein</keyword>
<proteinExistence type="inferred from homology"/>
<protein>
    <recommendedName>
        <fullName evidence="1">Large ribosomal subunit protein bL27</fullName>
    </recommendedName>
    <alternativeName>
        <fullName evidence="3">50S ribosomal protein L27</fullName>
    </alternativeName>
</protein>
<accession>Q493U6</accession>
<sequence length="84" mass="9174">MAHKKAGGSTRNGRDSHSKRLGVKCFGGECVSSGTIIVRQRGNTFHPGKYVGCGRDYTLFALKSGKVLFEKRGALRRKFISIVS</sequence>
<name>RL27_BLOPB</name>
<evidence type="ECO:0000255" key="1">
    <source>
        <dbReference type="HAMAP-Rule" id="MF_00539"/>
    </source>
</evidence>
<evidence type="ECO:0000256" key="2">
    <source>
        <dbReference type="SAM" id="MobiDB-lite"/>
    </source>
</evidence>
<evidence type="ECO:0000305" key="3"/>
<feature type="chain" id="PRO_1000017418" description="Large ribosomal subunit protein bL27">
    <location>
        <begin position="1"/>
        <end position="84"/>
    </location>
</feature>
<feature type="region of interest" description="Disordered" evidence="2">
    <location>
        <begin position="1"/>
        <end position="20"/>
    </location>
</feature>
<comment type="similarity">
    <text evidence="1">Belongs to the bacterial ribosomal protein bL27 family.</text>
</comment>
<dbReference type="EMBL" id="CP000016">
    <property type="protein sequence ID" value="AAZ40739.1"/>
    <property type="molecule type" value="Genomic_DNA"/>
</dbReference>
<dbReference type="RefSeq" id="WP_011282646.1">
    <property type="nucleotide sequence ID" value="NC_007292.1"/>
</dbReference>
<dbReference type="SMR" id="Q493U6"/>
<dbReference type="STRING" id="291272.BPEN_097"/>
<dbReference type="KEGG" id="bpn:BPEN_097"/>
<dbReference type="eggNOG" id="COG0211">
    <property type="taxonomic scope" value="Bacteria"/>
</dbReference>
<dbReference type="HOGENOM" id="CLU_095424_4_1_6"/>
<dbReference type="OrthoDB" id="9803474at2"/>
<dbReference type="Proteomes" id="UP000007794">
    <property type="component" value="Chromosome"/>
</dbReference>
<dbReference type="GO" id="GO:0022625">
    <property type="term" value="C:cytosolic large ribosomal subunit"/>
    <property type="evidence" value="ECO:0007669"/>
    <property type="project" value="TreeGrafter"/>
</dbReference>
<dbReference type="GO" id="GO:0003735">
    <property type="term" value="F:structural constituent of ribosome"/>
    <property type="evidence" value="ECO:0007669"/>
    <property type="project" value="InterPro"/>
</dbReference>
<dbReference type="GO" id="GO:0006412">
    <property type="term" value="P:translation"/>
    <property type="evidence" value="ECO:0007669"/>
    <property type="project" value="UniProtKB-UniRule"/>
</dbReference>
<dbReference type="FunFam" id="2.40.50.100:FF:000020">
    <property type="entry name" value="50S ribosomal protein L27"/>
    <property type="match status" value="1"/>
</dbReference>
<dbReference type="Gene3D" id="2.40.50.100">
    <property type="match status" value="1"/>
</dbReference>
<dbReference type="HAMAP" id="MF_00539">
    <property type="entry name" value="Ribosomal_bL27"/>
    <property type="match status" value="1"/>
</dbReference>
<dbReference type="InterPro" id="IPR001684">
    <property type="entry name" value="Ribosomal_bL27"/>
</dbReference>
<dbReference type="InterPro" id="IPR018261">
    <property type="entry name" value="Ribosomal_bL27_CS"/>
</dbReference>
<dbReference type="NCBIfam" id="TIGR00062">
    <property type="entry name" value="L27"/>
    <property type="match status" value="1"/>
</dbReference>
<dbReference type="PANTHER" id="PTHR15893:SF0">
    <property type="entry name" value="LARGE RIBOSOMAL SUBUNIT PROTEIN BL27M"/>
    <property type="match status" value="1"/>
</dbReference>
<dbReference type="PANTHER" id="PTHR15893">
    <property type="entry name" value="RIBOSOMAL PROTEIN L27"/>
    <property type="match status" value="1"/>
</dbReference>
<dbReference type="Pfam" id="PF01016">
    <property type="entry name" value="Ribosomal_L27"/>
    <property type="match status" value="1"/>
</dbReference>
<dbReference type="PRINTS" id="PR00063">
    <property type="entry name" value="RIBOSOMALL27"/>
</dbReference>
<dbReference type="SUPFAM" id="SSF110324">
    <property type="entry name" value="Ribosomal L27 protein-like"/>
    <property type="match status" value="1"/>
</dbReference>
<dbReference type="PROSITE" id="PS00831">
    <property type="entry name" value="RIBOSOMAL_L27"/>
    <property type="match status" value="1"/>
</dbReference>
<reference key="1">
    <citation type="journal article" date="2005" name="Genome Res.">
        <title>Genome sequence of Blochmannia pennsylvanicus indicates parallel evolutionary trends among bacterial mutualists of insects.</title>
        <authorList>
            <person name="Degnan P.H."/>
            <person name="Lazarus A.B."/>
            <person name="Wernegreen J.J."/>
        </authorList>
    </citation>
    <scope>NUCLEOTIDE SEQUENCE [LARGE SCALE GENOMIC DNA]</scope>
    <source>
        <strain>BPEN</strain>
    </source>
</reference>